<feature type="chain" id="PRO_0000355581" description="Dolichol kinase">
    <location>
        <begin position="1"/>
        <end position="534"/>
    </location>
</feature>
<feature type="topological domain" description="Cytoplasmic" evidence="3">
    <location>
        <begin position="1"/>
        <end position="16"/>
    </location>
</feature>
<feature type="transmembrane region" description="Helical; Name=1" evidence="2">
    <location>
        <begin position="17"/>
        <end position="37"/>
    </location>
</feature>
<feature type="topological domain" description="Extracellular" evidence="3">
    <location>
        <begin position="38"/>
        <end position="72"/>
    </location>
</feature>
<feature type="transmembrane region" description="Helical; Name=2" evidence="2">
    <location>
        <begin position="73"/>
        <end position="93"/>
    </location>
</feature>
<feature type="topological domain" description="Cytoplasmic" evidence="3">
    <location>
        <begin position="94"/>
        <end position="109"/>
    </location>
</feature>
<feature type="transmembrane region" description="Helical; Name=3" evidence="2">
    <location>
        <begin position="110"/>
        <end position="130"/>
    </location>
</feature>
<feature type="topological domain" description="Extracellular" evidence="3">
    <location>
        <begin position="131"/>
        <end position="132"/>
    </location>
</feature>
<feature type="transmembrane region" description="Helical; Name=4" evidence="2">
    <location>
        <begin position="133"/>
        <end position="153"/>
    </location>
</feature>
<feature type="topological domain" description="Cytoplasmic" evidence="3">
    <location>
        <begin position="154"/>
        <end position="161"/>
    </location>
</feature>
<feature type="transmembrane region" description="Helical; Name=5" evidence="2">
    <location>
        <begin position="162"/>
        <end position="182"/>
    </location>
</feature>
<feature type="topological domain" description="Extracellular" evidence="3">
    <location>
        <begin position="183"/>
        <end position="186"/>
    </location>
</feature>
<feature type="transmembrane region" description="Helical; Name=6" evidence="2">
    <location>
        <begin position="187"/>
        <end position="207"/>
    </location>
</feature>
<feature type="topological domain" description="Cytoplasmic" evidence="3">
    <location>
        <begin position="208"/>
        <end position="220"/>
    </location>
</feature>
<feature type="transmembrane region" description="Helical; Name=7" evidence="2">
    <location>
        <begin position="221"/>
        <end position="241"/>
    </location>
</feature>
<feature type="topological domain" description="Extracellular" evidence="3">
    <location>
        <begin position="242"/>
        <end position="252"/>
    </location>
</feature>
<feature type="transmembrane region" description="Helical; Name=8" evidence="2">
    <location>
        <begin position="253"/>
        <end position="273"/>
    </location>
</feature>
<feature type="topological domain" description="Cytoplasmic" evidence="3">
    <location>
        <begin position="274"/>
        <end position="293"/>
    </location>
</feature>
<feature type="transmembrane region" description="Helical; Name=9" evidence="2">
    <location>
        <begin position="294"/>
        <end position="314"/>
    </location>
</feature>
<feature type="topological domain" description="Extracellular" evidence="3">
    <location>
        <begin position="315"/>
        <end position="333"/>
    </location>
</feature>
<feature type="transmembrane region" description="Helical; Name=10" evidence="2">
    <location>
        <begin position="334"/>
        <end position="350"/>
    </location>
</feature>
<feature type="topological domain" description="Cytoplasmic" evidence="3">
    <location>
        <begin position="351"/>
        <end position="355"/>
    </location>
</feature>
<feature type="transmembrane region" description="Helical; Name=11" evidence="2">
    <location>
        <begin position="356"/>
        <end position="376"/>
    </location>
</feature>
<feature type="topological domain" description="Extracellular" evidence="3">
    <location>
        <begin position="377"/>
        <end position="397"/>
    </location>
</feature>
<feature type="transmembrane region" description="Helical; Name=12" evidence="2">
    <location>
        <begin position="398"/>
        <end position="418"/>
    </location>
</feature>
<feature type="topological domain" description="Cytoplasmic" evidence="3">
    <location>
        <begin position="419"/>
        <end position="432"/>
    </location>
</feature>
<feature type="transmembrane region" description="Helical; Name=13" evidence="2">
    <location>
        <begin position="433"/>
        <end position="453"/>
    </location>
</feature>
<feature type="topological domain" description="Extracellular" evidence="3">
    <location>
        <begin position="454"/>
        <end position="468"/>
    </location>
</feature>
<feature type="transmembrane region" description="Helical; Name=14" evidence="2">
    <location>
        <begin position="469"/>
        <end position="489"/>
    </location>
</feature>
<feature type="topological domain" description="Cytoplasmic" evidence="3">
    <location>
        <begin position="490"/>
        <end position="491"/>
    </location>
</feature>
<feature type="transmembrane region" description="Helical; Name=15" evidence="2">
    <location>
        <begin position="492"/>
        <end position="512"/>
    </location>
</feature>
<feature type="topological domain" description="Extracellular" evidence="3">
    <location>
        <begin position="513"/>
        <end position="534"/>
    </location>
</feature>
<feature type="region of interest" description="CTP-binding" evidence="1">
    <location>
        <begin position="455"/>
        <end position="470"/>
    </location>
</feature>
<evidence type="ECO:0000250" key="1">
    <source>
        <dbReference type="UniProtKB" id="Q9UPQ8"/>
    </source>
</evidence>
<evidence type="ECO:0000255" key="2"/>
<evidence type="ECO:0000305" key="3"/>
<evidence type="ECO:0000312" key="4">
    <source>
        <dbReference type="EMBL" id="AAH26973.1"/>
    </source>
</evidence>
<evidence type="ECO:0000312" key="5">
    <source>
        <dbReference type="EMBL" id="BAE26024.1"/>
    </source>
</evidence>
<evidence type="ECO:0000312" key="6">
    <source>
        <dbReference type="EMBL" id="BAF82000.1"/>
    </source>
</evidence>
<evidence type="ECO:0000312" key="7">
    <source>
        <dbReference type="MGI" id="MGI:2677836"/>
    </source>
</evidence>
<keyword id="KW-0256">Endoplasmic reticulum</keyword>
<keyword id="KW-0418">Kinase</keyword>
<keyword id="KW-0443">Lipid metabolism</keyword>
<keyword id="KW-0472">Membrane</keyword>
<keyword id="KW-1185">Reference proteome</keyword>
<keyword id="KW-0808">Transferase</keyword>
<keyword id="KW-0812">Transmembrane</keyword>
<keyword id="KW-1133">Transmembrane helix</keyword>
<dbReference type="EC" id="2.7.1.108" evidence="1"/>
<dbReference type="EMBL" id="AB073968">
    <property type="protein sequence ID" value="BAF82000.1"/>
    <property type="molecule type" value="mRNA"/>
</dbReference>
<dbReference type="EMBL" id="AK144705">
    <property type="protein sequence ID" value="BAE26024.1"/>
    <property type="molecule type" value="mRNA"/>
</dbReference>
<dbReference type="EMBL" id="AL954388">
    <property type="status" value="NOT_ANNOTATED_CDS"/>
    <property type="molecule type" value="Genomic_DNA"/>
</dbReference>
<dbReference type="EMBL" id="CH466542">
    <property type="protein sequence ID" value="EDL08455.1"/>
    <property type="molecule type" value="Genomic_DNA"/>
</dbReference>
<dbReference type="EMBL" id="BC026973">
    <property type="protein sequence ID" value="AAH26973.1"/>
    <property type="molecule type" value="mRNA"/>
</dbReference>
<dbReference type="CCDS" id="CCDS15877.1"/>
<dbReference type="RefSeq" id="NP_808316.1">
    <property type="nucleotide sequence ID" value="NM_177648.3"/>
</dbReference>
<dbReference type="BioGRID" id="230666">
    <property type="interactions" value="2"/>
</dbReference>
<dbReference type="FunCoup" id="Q8R2Y3">
    <property type="interactions" value="859"/>
</dbReference>
<dbReference type="IntAct" id="Q8R2Y3">
    <property type="interactions" value="1"/>
</dbReference>
<dbReference type="STRING" id="10090.ENSMUSP00000097792"/>
<dbReference type="PhosphoSitePlus" id="Q8R2Y3"/>
<dbReference type="PaxDb" id="10090-ENSMUSP00000097792"/>
<dbReference type="PeptideAtlas" id="Q8R2Y3"/>
<dbReference type="ProteomicsDB" id="277372"/>
<dbReference type="Pumba" id="Q8R2Y3"/>
<dbReference type="Antibodypedia" id="53680">
    <property type="antibodies" value="70 antibodies from 18 providers"/>
</dbReference>
<dbReference type="Ensembl" id="ENSMUST00000100219.5">
    <property type="protein sequence ID" value="ENSMUSP00000097792.4"/>
    <property type="gene ID" value="ENSMUSG00000075419.5"/>
</dbReference>
<dbReference type="GeneID" id="227697"/>
<dbReference type="KEGG" id="mmu:227697"/>
<dbReference type="UCSC" id="uc008jby.1">
    <property type="organism name" value="mouse"/>
</dbReference>
<dbReference type="AGR" id="MGI:2677836"/>
<dbReference type="CTD" id="22845"/>
<dbReference type="MGI" id="MGI:2677836">
    <property type="gene designation" value="Dolk"/>
</dbReference>
<dbReference type="VEuPathDB" id="HostDB:ENSMUSG00000075419"/>
<dbReference type="eggNOG" id="KOG2468">
    <property type="taxonomic scope" value="Eukaryota"/>
</dbReference>
<dbReference type="GeneTree" id="ENSGT00390000004067"/>
<dbReference type="HOGENOM" id="CLU_027611_2_1_1"/>
<dbReference type="InParanoid" id="Q8R2Y3"/>
<dbReference type="OMA" id="EIHWPGT"/>
<dbReference type="OrthoDB" id="377083at2759"/>
<dbReference type="PhylomeDB" id="Q8R2Y3"/>
<dbReference type="TreeFam" id="TF323379"/>
<dbReference type="Reactome" id="R-MMU-446199">
    <property type="pathway name" value="Synthesis of Dolichyl-phosphate"/>
</dbReference>
<dbReference type="UniPathway" id="UPA00378"/>
<dbReference type="BioGRID-ORCS" id="227697">
    <property type="hits" value="29 hits in 81 CRISPR screens"/>
</dbReference>
<dbReference type="ChiTaRS" id="Dolk">
    <property type="organism name" value="mouse"/>
</dbReference>
<dbReference type="PRO" id="PR:Q8R2Y3"/>
<dbReference type="Proteomes" id="UP000000589">
    <property type="component" value="Chromosome 2"/>
</dbReference>
<dbReference type="RNAct" id="Q8R2Y3">
    <property type="molecule type" value="protein"/>
</dbReference>
<dbReference type="Bgee" id="ENSMUSG00000075419">
    <property type="expression patterns" value="Expressed in humerus cartilage element and 246 other cell types or tissues"/>
</dbReference>
<dbReference type="GO" id="GO:0005789">
    <property type="term" value="C:endoplasmic reticulum membrane"/>
    <property type="evidence" value="ECO:0000250"/>
    <property type="project" value="UniProtKB"/>
</dbReference>
<dbReference type="GO" id="GO:0004168">
    <property type="term" value="F:dolichol kinase activity"/>
    <property type="evidence" value="ECO:0000250"/>
    <property type="project" value="UniProtKB"/>
</dbReference>
<dbReference type="GO" id="GO:0019348">
    <property type="term" value="P:dolichol metabolic process"/>
    <property type="evidence" value="ECO:0007669"/>
    <property type="project" value="Ensembl"/>
</dbReference>
<dbReference type="GO" id="GO:0180047">
    <property type="term" value="P:dolichol phosphate mannose biosynthetic process"/>
    <property type="evidence" value="ECO:0000250"/>
    <property type="project" value="UniProtKB"/>
</dbReference>
<dbReference type="GO" id="GO:0043048">
    <property type="term" value="P:dolichyl monophosphate biosynthetic process"/>
    <property type="evidence" value="ECO:0000250"/>
    <property type="project" value="UniProtKB"/>
</dbReference>
<dbReference type="GO" id="GO:0035268">
    <property type="term" value="P:protein mannosylation"/>
    <property type="evidence" value="ECO:0000250"/>
    <property type="project" value="UniProtKB"/>
</dbReference>
<dbReference type="GO" id="GO:0006487">
    <property type="term" value="P:protein N-linked glycosylation"/>
    <property type="evidence" value="ECO:0000250"/>
    <property type="project" value="UniProtKB"/>
</dbReference>
<dbReference type="InterPro" id="IPR032974">
    <property type="entry name" value="Polypren_kinase"/>
</dbReference>
<dbReference type="PANTHER" id="PTHR13205:SF15">
    <property type="entry name" value="DOLICHOL KINASE"/>
    <property type="match status" value="1"/>
</dbReference>
<dbReference type="PANTHER" id="PTHR13205">
    <property type="entry name" value="TRANSMEMBRANE PROTEIN 15-RELATED"/>
    <property type="match status" value="1"/>
</dbReference>
<accession>Q8R2Y3</accession>
<sequence>MTRQCPPQESGAALSGSVLAEAAVVFAVVLSIHAAVWDRYSWCAVALAVQAFYVQYKWDRLLQQGNAVFQFRMSANSGLLPASMVMPLLGLVMKERCQTAGNPYFERFGIVVAATGMAVALFSSVLALGITRPVPTNTCAISGLAGGVIIYIMRHSLSVGEVIEVLEVLLIFVYLNMILLYLLPRCFTPGEALLVLGGISFVLNQLIKRSLTESQGDPVDFFLLVVVVGMVLMGVFFSTLFVFMDSGTWASSIFFHLMTCVLGLGVVLPWLHWLIRRNPLLWLLQFLFYTETRIYLLAYWSLLASVACLVVLYQNAKRSSSESKKHRAPTITRKYFHFIVVATYIPGIIFDRPLLYVAATVCLAVFIFLEYVRYFRIKPLGHTLRSLLSLFLDERDSGPLILTHIYLLLGMSLPIWLIPRPCTQKDSLEGARALVPYAGVLAVGVGDTVASIFGSTMGEIRWPGTKKTFEGTMTSIFAQIISVALILIFDSGVDLNYSYAWILGSISTVSLLEAYTTQIDNLLLPLYLLILLMA</sequence>
<proteinExistence type="evidence at protein level"/>
<organism>
    <name type="scientific">Mus musculus</name>
    <name type="common">Mouse</name>
    <dbReference type="NCBI Taxonomy" id="10090"/>
    <lineage>
        <taxon>Eukaryota</taxon>
        <taxon>Metazoa</taxon>
        <taxon>Chordata</taxon>
        <taxon>Craniata</taxon>
        <taxon>Vertebrata</taxon>
        <taxon>Euteleostomi</taxon>
        <taxon>Mammalia</taxon>
        <taxon>Eutheria</taxon>
        <taxon>Euarchontoglires</taxon>
        <taxon>Glires</taxon>
        <taxon>Rodentia</taxon>
        <taxon>Myomorpha</taxon>
        <taxon>Muroidea</taxon>
        <taxon>Muridae</taxon>
        <taxon>Murinae</taxon>
        <taxon>Mus</taxon>
        <taxon>Mus</taxon>
    </lineage>
</organism>
<reference evidence="6" key="1">
    <citation type="submission" date="2001-11" db="EMBL/GenBank/DDBJ databases">
        <title>Mouse mRNAs expressed in the spinal cord.</title>
        <authorList>
            <person name="Nishizawa M."/>
            <person name="Minami T."/>
            <person name="Ito S."/>
        </authorList>
    </citation>
    <scope>NUCLEOTIDE SEQUENCE [MRNA]</scope>
    <source>
        <strain evidence="6">ddY</strain>
        <tissue evidence="6">Spinal cord</tissue>
    </source>
</reference>
<reference evidence="5" key="2">
    <citation type="journal article" date="2005" name="Science">
        <title>The transcriptional landscape of the mammalian genome.</title>
        <authorList>
            <person name="Carninci P."/>
            <person name="Kasukawa T."/>
            <person name="Katayama S."/>
            <person name="Gough J."/>
            <person name="Frith M.C."/>
            <person name="Maeda N."/>
            <person name="Oyama R."/>
            <person name="Ravasi T."/>
            <person name="Lenhard B."/>
            <person name="Wells C."/>
            <person name="Kodzius R."/>
            <person name="Shimokawa K."/>
            <person name="Bajic V.B."/>
            <person name="Brenner S.E."/>
            <person name="Batalov S."/>
            <person name="Forrest A.R."/>
            <person name="Zavolan M."/>
            <person name="Davis M.J."/>
            <person name="Wilming L.G."/>
            <person name="Aidinis V."/>
            <person name="Allen J.E."/>
            <person name="Ambesi-Impiombato A."/>
            <person name="Apweiler R."/>
            <person name="Aturaliya R.N."/>
            <person name="Bailey T.L."/>
            <person name="Bansal M."/>
            <person name="Baxter L."/>
            <person name="Beisel K.W."/>
            <person name="Bersano T."/>
            <person name="Bono H."/>
            <person name="Chalk A.M."/>
            <person name="Chiu K.P."/>
            <person name="Choudhary V."/>
            <person name="Christoffels A."/>
            <person name="Clutterbuck D.R."/>
            <person name="Crowe M.L."/>
            <person name="Dalla E."/>
            <person name="Dalrymple B.P."/>
            <person name="de Bono B."/>
            <person name="Della Gatta G."/>
            <person name="di Bernardo D."/>
            <person name="Down T."/>
            <person name="Engstrom P."/>
            <person name="Fagiolini M."/>
            <person name="Faulkner G."/>
            <person name="Fletcher C.F."/>
            <person name="Fukushima T."/>
            <person name="Furuno M."/>
            <person name="Futaki S."/>
            <person name="Gariboldi M."/>
            <person name="Georgii-Hemming P."/>
            <person name="Gingeras T.R."/>
            <person name="Gojobori T."/>
            <person name="Green R.E."/>
            <person name="Gustincich S."/>
            <person name="Harbers M."/>
            <person name="Hayashi Y."/>
            <person name="Hensch T.K."/>
            <person name="Hirokawa N."/>
            <person name="Hill D."/>
            <person name="Huminiecki L."/>
            <person name="Iacono M."/>
            <person name="Ikeo K."/>
            <person name="Iwama A."/>
            <person name="Ishikawa T."/>
            <person name="Jakt M."/>
            <person name="Kanapin A."/>
            <person name="Katoh M."/>
            <person name="Kawasawa Y."/>
            <person name="Kelso J."/>
            <person name="Kitamura H."/>
            <person name="Kitano H."/>
            <person name="Kollias G."/>
            <person name="Krishnan S.P."/>
            <person name="Kruger A."/>
            <person name="Kummerfeld S.K."/>
            <person name="Kurochkin I.V."/>
            <person name="Lareau L.F."/>
            <person name="Lazarevic D."/>
            <person name="Lipovich L."/>
            <person name="Liu J."/>
            <person name="Liuni S."/>
            <person name="McWilliam S."/>
            <person name="Madan Babu M."/>
            <person name="Madera M."/>
            <person name="Marchionni L."/>
            <person name="Matsuda H."/>
            <person name="Matsuzawa S."/>
            <person name="Miki H."/>
            <person name="Mignone F."/>
            <person name="Miyake S."/>
            <person name="Morris K."/>
            <person name="Mottagui-Tabar S."/>
            <person name="Mulder N."/>
            <person name="Nakano N."/>
            <person name="Nakauchi H."/>
            <person name="Ng P."/>
            <person name="Nilsson R."/>
            <person name="Nishiguchi S."/>
            <person name="Nishikawa S."/>
            <person name="Nori F."/>
            <person name="Ohara O."/>
            <person name="Okazaki Y."/>
            <person name="Orlando V."/>
            <person name="Pang K.C."/>
            <person name="Pavan W.J."/>
            <person name="Pavesi G."/>
            <person name="Pesole G."/>
            <person name="Petrovsky N."/>
            <person name="Piazza S."/>
            <person name="Reed J."/>
            <person name="Reid J.F."/>
            <person name="Ring B.Z."/>
            <person name="Ringwald M."/>
            <person name="Rost B."/>
            <person name="Ruan Y."/>
            <person name="Salzberg S.L."/>
            <person name="Sandelin A."/>
            <person name="Schneider C."/>
            <person name="Schoenbach C."/>
            <person name="Sekiguchi K."/>
            <person name="Semple C.A."/>
            <person name="Seno S."/>
            <person name="Sessa L."/>
            <person name="Sheng Y."/>
            <person name="Shibata Y."/>
            <person name="Shimada H."/>
            <person name="Shimada K."/>
            <person name="Silva D."/>
            <person name="Sinclair B."/>
            <person name="Sperling S."/>
            <person name="Stupka E."/>
            <person name="Sugiura K."/>
            <person name="Sultana R."/>
            <person name="Takenaka Y."/>
            <person name="Taki K."/>
            <person name="Tammoja K."/>
            <person name="Tan S.L."/>
            <person name="Tang S."/>
            <person name="Taylor M.S."/>
            <person name="Tegner J."/>
            <person name="Teichmann S.A."/>
            <person name="Ueda H.R."/>
            <person name="van Nimwegen E."/>
            <person name="Verardo R."/>
            <person name="Wei C.L."/>
            <person name="Yagi K."/>
            <person name="Yamanishi H."/>
            <person name="Zabarovsky E."/>
            <person name="Zhu S."/>
            <person name="Zimmer A."/>
            <person name="Hide W."/>
            <person name="Bult C."/>
            <person name="Grimmond S.M."/>
            <person name="Teasdale R.D."/>
            <person name="Liu E.T."/>
            <person name="Brusic V."/>
            <person name="Quackenbush J."/>
            <person name="Wahlestedt C."/>
            <person name="Mattick J.S."/>
            <person name="Hume D.A."/>
            <person name="Kai C."/>
            <person name="Sasaki D."/>
            <person name="Tomaru Y."/>
            <person name="Fukuda S."/>
            <person name="Kanamori-Katayama M."/>
            <person name="Suzuki M."/>
            <person name="Aoki J."/>
            <person name="Arakawa T."/>
            <person name="Iida J."/>
            <person name="Imamura K."/>
            <person name="Itoh M."/>
            <person name="Kato T."/>
            <person name="Kawaji H."/>
            <person name="Kawagashira N."/>
            <person name="Kawashima T."/>
            <person name="Kojima M."/>
            <person name="Kondo S."/>
            <person name="Konno H."/>
            <person name="Nakano K."/>
            <person name="Ninomiya N."/>
            <person name="Nishio T."/>
            <person name="Okada M."/>
            <person name="Plessy C."/>
            <person name="Shibata K."/>
            <person name="Shiraki T."/>
            <person name="Suzuki S."/>
            <person name="Tagami M."/>
            <person name="Waki K."/>
            <person name="Watahiki A."/>
            <person name="Okamura-Oho Y."/>
            <person name="Suzuki H."/>
            <person name="Kawai J."/>
            <person name="Hayashizaki Y."/>
        </authorList>
    </citation>
    <scope>NUCLEOTIDE SEQUENCE [LARGE SCALE MRNA]</scope>
    <source>
        <tissue evidence="5">Lung</tissue>
    </source>
</reference>
<reference key="3">
    <citation type="journal article" date="2009" name="PLoS Biol.">
        <title>Lineage-specific biology revealed by a finished genome assembly of the mouse.</title>
        <authorList>
            <person name="Church D.M."/>
            <person name="Goodstadt L."/>
            <person name="Hillier L.W."/>
            <person name="Zody M.C."/>
            <person name="Goldstein S."/>
            <person name="She X."/>
            <person name="Bult C.J."/>
            <person name="Agarwala R."/>
            <person name="Cherry J.L."/>
            <person name="DiCuccio M."/>
            <person name="Hlavina W."/>
            <person name="Kapustin Y."/>
            <person name="Meric P."/>
            <person name="Maglott D."/>
            <person name="Birtle Z."/>
            <person name="Marques A.C."/>
            <person name="Graves T."/>
            <person name="Zhou S."/>
            <person name="Teague B."/>
            <person name="Potamousis K."/>
            <person name="Churas C."/>
            <person name="Place M."/>
            <person name="Herschleb J."/>
            <person name="Runnheim R."/>
            <person name="Forrest D."/>
            <person name="Amos-Landgraf J."/>
            <person name="Schwartz D.C."/>
            <person name="Cheng Z."/>
            <person name="Lindblad-Toh K."/>
            <person name="Eichler E.E."/>
            <person name="Ponting C.P."/>
        </authorList>
    </citation>
    <scope>NUCLEOTIDE SEQUENCE [LARGE SCALE GENOMIC DNA]</scope>
    <source>
        <strain>C57BL/6J</strain>
    </source>
</reference>
<reference evidence="6" key="4">
    <citation type="submission" date="2005-07" db="EMBL/GenBank/DDBJ databases">
        <authorList>
            <person name="Mural R.J."/>
            <person name="Istrail S."/>
            <person name="Sutton G.G."/>
            <person name="Florea L."/>
            <person name="Halpern A.L."/>
            <person name="Mobarry C.M."/>
            <person name="Lippert R."/>
            <person name="Walenz B."/>
            <person name="Shatkay H."/>
            <person name="Dew I."/>
            <person name="Miller J.R."/>
            <person name="Flanigan M.J."/>
            <person name="Edwards N.J."/>
            <person name="Bolanos R."/>
            <person name="Fasulo D."/>
            <person name="Halldorsson B.V."/>
            <person name="Hannenhalli S."/>
            <person name="Turner R."/>
            <person name="Yooseph S."/>
            <person name="Lu F."/>
            <person name="Nusskern D.R."/>
            <person name="Shue B.C."/>
            <person name="Zheng X.H."/>
            <person name="Zhong F."/>
            <person name="Delcher A.L."/>
            <person name="Huson D.H."/>
            <person name="Kravitz S.A."/>
            <person name="Mouchard L."/>
            <person name="Reinert K."/>
            <person name="Remington K.A."/>
            <person name="Clark A.G."/>
            <person name="Waterman M.S."/>
            <person name="Eichler E.E."/>
            <person name="Adams M.D."/>
            <person name="Hunkapiller M.W."/>
            <person name="Myers E.W."/>
            <person name="Venter J.C."/>
        </authorList>
    </citation>
    <scope>NUCLEOTIDE SEQUENCE [LARGE SCALE GENOMIC DNA]</scope>
</reference>
<reference evidence="4" key="5">
    <citation type="journal article" date="2004" name="Genome Res.">
        <title>The status, quality, and expansion of the NIH full-length cDNA project: the Mammalian Gene Collection (MGC).</title>
        <authorList>
            <consortium name="The MGC Project Team"/>
        </authorList>
    </citation>
    <scope>NUCLEOTIDE SEQUENCE [LARGE SCALE MRNA]</scope>
    <source>
        <strain evidence="4">FVB/N-3</strain>
        <tissue evidence="4">Mammary tumor</tissue>
    </source>
</reference>
<reference key="6">
    <citation type="journal article" date="2010" name="Cell">
        <title>A tissue-specific atlas of mouse protein phosphorylation and expression.</title>
        <authorList>
            <person name="Huttlin E.L."/>
            <person name="Jedrychowski M.P."/>
            <person name="Elias J.E."/>
            <person name="Goswami T."/>
            <person name="Rad R."/>
            <person name="Beausoleil S.A."/>
            <person name="Villen J."/>
            <person name="Haas W."/>
            <person name="Sowa M.E."/>
            <person name="Gygi S.P."/>
        </authorList>
    </citation>
    <scope>IDENTIFICATION BY MASS SPECTROMETRY [LARGE SCALE ANALYSIS]</scope>
    <source>
        <tissue>Spleen</tissue>
    </source>
</reference>
<name>DOLK_MOUSE</name>
<protein>
    <recommendedName>
        <fullName evidence="7">Dolichol kinase</fullName>
        <ecNumber evidence="1">2.7.1.108</ecNumber>
    </recommendedName>
    <alternativeName>
        <fullName evidence="7">Transmembrane protein 15</fullName>
    </alternativeName>
</protein>
<comment type="function">
    <text evidence="1">Catalyzes CTP-mediated phosphorylation of dolichol, the terminal step in de novo dolichyl monophosphate (Dol-P) biosynthesis. Dol-P is a lipid carrier essential for the synthesis of N-linked and O-linked oligosaccharides and for GPI anchors.</text>
</comment>
<comment type="catalytic activity">
    <reaction evidence="1">
        <text>a di-trans,poly-cis-dolichol + CTP = a di-trans,poly-cis-dolichyl phosphate + CDP + H(+)</text>
        <dbReference type="Rhea" id="RHEA:13133"/>
        <dbReference type="Rhea" id="RHEA-COMP:19495"/>
        <dbReference type="Rhea" id="RHEA-COMP:19498"/>
        <dbReference type="ChEBI" id="CHEBI:15378"/>
        <dbReference type="ChEBI" id="CHEBI:16091"/>
        <dbReference type="ChEBI" id="CHEBI:37563"/>
        <dbReference type="ChEBI" id="CHEBI:57683"/>
        <dbReference type="ChEBI" id="CHEBI:58069"/>
        <dbReference type="EC" id="2.7.1.108"/>
    </reaction>
    <physiologicalReaction direction="left-to-right" evidence="1">
        <dbReference type="Rhea" id="RHEA:13134"/>
    </physiologicalReaction>
</comment>
<comment type="pathway">
    <text evidence="1">Protein modification; protein glycosylation.</text>
</comment>
<comment type="subcellular location">
    <subcellularLocation>
        <location evidence="1">Endoplasmic reticulum membrane</location>
        <topology evidence="1">Multi-pass membrane protein</topology>
    </subcellularLocation>
</comment>
<comment type="similarity">
    <text evidence="1">Belongs to the polyprenol kinase family.</text>
</comment>
<gene>
    <name evidence="7" type="primary">Dolk</name>
    <name evidence="7" type="synonym">Tmem15</name>
</gene>